<name>A30BL_HUMAN</name>
<keyword id="KW-0025">Alternative splicing</keyword>
<keyword id="KW-0040">ANK repeat</keyword>
<keyword id="KW-1185">Reference proteome</keyword>
<keyword id="KW-0677">Repeat</keyword>
<comment type="alternative products">
    <event type="alternative splicing"/>
    <isoform>
        <id>A7E2S9-1</id>
        <name>1</name>
        <sequence type="displayed"/>
    </isoform>
    <isoform>
        <id>A7E2S9-2</id>
        <name>2</name>
        <sequence type="described" ref="VSP_039808"/>
    </isoform>
</comment>
<comment type="miscellaneous">
    <molecule>Isoform 2</molecule>
    <text evidence="3">May be produced at very low levels due to a premature stop codon in the mRNA, leading to nonsense-mediated mRNA decay.</text>
</comment>
<evidence type="ECO:0000256" key="1">
    <source>
        <dbReference type="SAM" id="MobiDB-lite"/>
    </source>
</evidence>
<evidence type="ECO:0000303" key="2">
    <source>
    </source>
</evidence>
<evidence type="ECO:0000305" key="3"/>
<protein>
    <recommendedName>
        <fullName>Putative ankyrin repeat domain-containing protein 30B-like</fullName>
    </recommendedName>
</protein>
<dbReference type="EMBL" id="AC097532">
    <property type="status" value="NOT_ANNOTATED_CDS"/>
    <property type="molecule type" value="Genomic_DNA"/>
</dbReference>
<dbReference type="EMBL" id="AC098826">
    <property type="status" value="NOT_ANNOTATED_CDS"/>
    <property type="molecule type" value="Genomic_DNA"/>
</dbReference>
<dbReference type="EMBL" id="CH471058">
    <property type="protein sequence ID" value="EAX11682.1"/>
    <property type="molecule type" value="Genomic_DNA"/>
</dbReference>
<dbReference type="EMBL" id="BC150521">
    <property type="status" value="NOT_ANNOTATED_CDS"/>
    <property type="molecule type" value="mRNA"/>
</dbReference>
<dbReference type="CCDS" id="CCDS86883.1">
    <molecule id="A7E2S9-1"/>
</dbReference>
<dbReference type="RefSeq" id="NP_001345345.1">
    <molecule id="A7E2S9-1"/>
    <property type="nucleotide sequence ID" value="NM_001358416.1"/>
</dbReference>
<dbReference type="RefSeq" id="XP_047300869.1">
    <molecule id="A7E2S9-2"/>
    <property type="nucleotide sequence ID" value="XM_047444913.1"/>
</dbReference>
<dbReference type="RefSeq" id="XP_054198806.1">
    <molecule id="A7E2S9-2"/>
    <property type="nucleotide sequence ID" value="XM_054342831.1"/>
</dbReference>
<dbReference type="SMR" id="A7E2S9"/>
<dbReference type="STRING" id="9606.ENSP00000386398"/>
<dbReference type="GlyGen" id="A7E2S9">
    <property type="glycosylation" value="1 site, 1 O-linked glycan (1 site)"/>
</dbReference>
<dbReference type="BioMuta" id="ANKRD30BL"/>
<dbReference type="jPOST" id="A7E2S9"/>
<dbReference type="MassIVE" id="A7E2S9"/>
<dbReference type="PaxDb" id="9606-ENSP00000386398"/>
<dbReference type="PeptideAtlas" id="A7E2S9"/>
<dbReference type="Antibodypedia" id="81986">
    <property type="antibodies" value="3 antibodies from 3 providers"/>
</dbReference>
<dbReference type="Ensembl" id="ENST00000295181.6">
    <molecule id="A7E2S9-2"/>
    <property type="protein sequence ID" value="ENSP00000295181.6"/>
    <property type="gene ID" value="ENSG00000163046.16"/>
</dbReference>
<dbReference type="Ensembl" id="ENST00000409867.6">
    <molecule id="A7E2S9-1"/>
    <property type="protein sequence ID" value="ENSP00000386398.1"/>
    <property type="gene ID" value="ENSG00000163046.16"/>
</dbReference>
<dbReference type="GeneID" id="554226"/>
<dbReference type="MANE-Select" id="ENST00000409867.6">
    <property type="protein sequence ID" value="ENSP00000386398.1"/>
    <property type="RefSeq nucleotide sequence ID" value="NM_001358416.1"/>
    <property type="RefSeq protein sequence ID" value="NP_001345345.1"/>
</dbReference>
<dbReference type="UCSC" id="uc061nxe.1">
    <molecule id="A7E2S9-1"/>
    <property type="organism name" value="human"/>
</dbReference>
<dbReference type="AGR" id="HGNC:35167"/>
<dbReference type="GeneCards" id="ANKRD30BL"/>
<dbReference type="HGNC" id="HGNC:35167">
    <property type="gene designation" value="ANKRD30BL"/>
</dbReference>
<dbReference type="HPA" id="ENSG00000163046">
    <property type="expression patterns" value="Tissue enriched (testis)"/>
</dbReference>
<dbReference type="neXtProt" id="NX_A7E2S9"/>
<dbReference type="OpenTargets" id="ENSG00000163046"/>
<dbReference type="VEuPathDB" id="HostDB:ENSG00000163046"/>
<dbReference type="eggNOG" id="KOG0504">
    <property type="taxonomic scope" value="Eukaryota"/>
</dbReference>
<dbReference type="GeneTree" id="ENSGT00940000164163"/>
<dbReference type="HOGENOM" id="CLU_000134_9_4_1"/>
<dbReference type="InParanoid" id="A7E2S9"/>
<dbReference type="OMA" id="CINWGDA"/>
<dbReference type="OrthoDB" id="9540030at2759"/>
<dbReference type="PAN-GO" id="A7E2S9">
    <property type="GO annotations" value="0 GO annotations based on evolutionary models"/>
</dbReference>
<dbReference type="PhylomeDB" id="A7E2S9"/>
<dbReference type="TreeFam" id="TF337879"/>
<dbReference type="ChiTaRS" id="ANKRD30BL">
    <property type="organism name" value="human"/>
</dbReference>
<dbReference type="Pharos" id="A7E2S9">
    <property type="development level" value="Tdark"/>
</dbReference>
<dbReference type="PRO" id="PR:A7E2S9"/>
<dbReference type="Proteomes" id="UP000005640">
    <property type="component" value="Chromosome 2"/>
</dbReference>
<dbReference type="RNAct" id="A7E2S9">
    <property type="molecule type" value="protein"/>
</dbReference>
<dbReference type="Bgee" id="ENSG00000163046">
    <property type="expression patterns" value="Expressed in colonic epithelium and 83 other cell types or tissues"/>
</dbReference>
<dbReference type="Gene3D" id="1.25.40.20">
    <property type="entry name" value="Ankyrin repeat-containing domain"/>
    <property type="match status" value="2"/>
</dbReference>
<dbReference type="InterPro" id="IPR050657">
    <property type="entry name" value="Ankyrin_repeat_domain"/>
</dbReference>
<dbReference type="InterPro" id="IPR002110">
    <property type="entry name" value="Ankyrin_rpt"/>
</dbReference>
<dbReference type="InterPro" id="IPR036770">
    <property type="entry name" value="Ankyrin_rpt-contain_sf"/>
</dbReference>
<dbReference type="PANTHER" id="PTHR24147">
    <property type="entry name" value="ANKYRIN REPEAT DOMAIN 36-RELATED"/>
    <property type="match status" value="1"/>
</dbReference>
<dbReference type="PANTHER" id="PTHR24147:SF63">
    <property type="entry name" value="ANKYRIN REPEAT DOMAIN-CONTAINING PROTEIN 30A"/>
    <property type="match status" value="1"/>
</dbReference>
<dbReference type="Pfam" id="PF00023">
    <property type="entry name" value="Ank"/>
    <property type="match status" value="2"/>
</dbReference>
<dbReference type="Pfam" id="PF12796">
    <property type="entry name" value="Ank_2"/>
    <property type="match status" value="1"/>
</dbReference>
<dbReference type="PRINTS" id="PR01415">
    <property type="entry name" value="ANKYRIN"/>
</dbReference>
<dbReference type="SMART" id="SM00248">
    <property type="entry name" value="ANK"/>
    <property type="match status" value="4"/>
</dbReference>
<dbReference type="SUPFAM" id="SSF48403">
    <property type="entry name" value="Ankyrin repeat"/>
    <property type="match status" value="1"/>
</dbReference>
<dbReference type="PROSITE" id="PS50297">
    <property type="entry name" value="ANK_REP_REGION"/>
    <property type="match status" value="1"/>
</dbReference>
<dbReference type="PROSITE" id="PS50088">
    <property type="entry name" value="ANK_REPEAT"/>
    <property type="match status" value="3"/>
</dbReference>
<proteinExistence type="evidence at transcript level"/>
<organism>
    <name type="scientific">Homo sapiens</name>
    <name type="common">Human</name>
    <dbReference type="NCBI Taxonomy" id="9606"/>
    <lineage>
        <taxon>Eukaryota</taxon>
        <taxon>Metazoa</taxon>
        <taxon>Chordata</taxon>
        <taxon>Craniata</taxon>
        <taxon>Vertebrata</taxon>
        <taxon>Euteleostomi</taxon>
        <taxon>Mammalia</taxon>
        <taxon>Eutheria</taxon>
        <taxon>Euarchontoglires</taxon>
        <taxon>Primates</taxon>
        <taxon>Haplorrhini</taxon>
        <taxon>Catarrhini</taxon>
        <taxon>Hominidae</taxon>
        <taxon>Homo</taxon>
    </lineage>
</organism>
<reference key="1">
    <citation type="journal article" date="2005" name="Nature">
        <title>Generation and annotation of the DNA sequences of human chromosomes 2 and 4.</title>
        <authorList>
            <person name="Hillier L.W."/>
            <person name="Graves T.A."/>
            <person name="Fulton R.S."/>
            <person name="Fulton L.A."/>
            <person name="Pepin K.H."/>
            <person name="Minx P."/>
            <person name="Wagner-McPherson C."/>
            <person name="Layman D."/>
            <person name="Wylie K."/>
            <person name="Sekhon M."/>
            <person name="Becker M.C."/>
            <person name="Fewell G.A."/>
            <person name="Delehaunty K.D."/>
            <person name="Miner T.L."/>
            <person name="Nash W.E."/>
            <person name="Kremitzki C."/>
            <person name="Oddy L."/>
            <person name="Du H."/>
            <person name="Sun H."/>
            <person name="Bradshaw-Cordum H."/>
            <person name="Ali J."/>
            <person name="Carter J."/>
            <person name="Cordes M."/>
            <person name="Harris A."/>
            <person name="Isak A."/>
            <person name="van Brunt A."/>
            <person name="Nguyen C."/>
            <person name="Du F."/>
            <person name="Courtney L."/>
            <person name="Kalicki J."/>
            <person name="Ozersky P."/>
            <person name="Abbott S."/>
            <person name="Armstrong J."/>
            <person name="Belter E.A."/>
            <person name="Caruso L."/>
            <person name="Cedroni M."/>
            <person name="Cotton M."/>
            <person name="Davidson T."/>
            <person name="Desai A."/>
            <person name="Elliott G."/>
            <person name="Erb T."/>
            <person name="Fronick C."/>
            <person name="Gaige T."/>
            <person name="Haakenson W."/>
            <person name="Haglund K."/>
            <person name="Holmes A."/>
            <person name="Harkins R."/>
            <person name="Kim K."/>
            <person name="Kruchowski S.S."/>
            <person name="Strong C.M."/>
            <person name="Grewal N."/>
            <person name="Goyea E."/>
            <person name="Hou S."/>
            <person name="Levy A."/>
            <person name="Martinka S."/>
            <person name="Mead K."/>
            <person name="McLellan M.D."/>
            <person name="Meyer R."/>
            <person name="Randall-Maher J."/>
            <person name="Tomlinson C."/>
            <person name="Dauphin-Kohlberg S."/>
            <person name="Kozlowicz-Reilly A."/>
            <person name="Shah N."/>
            <person name="Swearengen-Shahid S."/>
            <person name="Snider J."/>
            <person name="Strong J.T."/>
            <person name="Thompson J."/>
            <person name="Yoakum M."/>
            <person name="Leonard S."/>
            <person name="Pearman C."/>
            <person name="Trani L."/>
            <person name="Radionenko M."/>
            <person name="Waligorski J.E."/>
            <person name="Wang C."/>
            <person name="Rock S.M."/>
            <person name="Tin-Wollam A.-M."/>
            <person name="Maupin R."/>
            <person name="Latreille P."/>
            <person name="Wendl M.C."/>
            <person name="Yang S.-P."/>
            <person name="Pohl C."/>
            <person name="Wallis J.W."/>
            <person name="Spieth J."/>
            <person name="Bieri T.A."/>
            <person name="Berkowicz N."/>
            <person name="Nelson J.O."/>
            <person name="Osborne J."/>
            <person name="Ding L."/>
            <person name="Meyer R."/>
            <person name="Sabo A."/>
            <person name="Shotland Y."/>
            <person name="Sinha P."/>
            <person name="Wohldmann P.E."/>
            <person name="Cook L.L."/>
            <person name="Hickenbotham M.T."/>
            <person name="Eldred J."/>
            <person name="Williams D."/>
            <person name="Jones T.A."/>
            <person name="She X."/>
            <person name="Ciccarelli F.D."/>
            <person name="Izaurralde E."/>
            <person name="Taylor J."/>
            <person name="Schmutz J."/>
            <person name="Myers R.M."/>
            <person name="Cox D.R."/>
            <person name="Huang X."/>
            <person name="McPherson J.D."/>
            <person name="Mardis E.R."/>
            <person name="Clifton S.W."/>
            <person name="Warren W.C."/>
            <person name="Chinwalla A.T."/>
            <person name="Eddy S.R."/>
            <person name="Marra M.A."/>
            <person name="Ovcharenko I."/>
            <person name="Furey T.S."/>
            <person name="Miller W."/>
            <person name="Eichler E.E."/>
            <person name="Bork P."/>
            <person name="Suyama M."/>
            <person name="Torrents D."/>
            <person name="Waterston R.H."/>
            <person name="Wilson R.K."/>
        </authorList>
    </citation>
    <scope>NUCLEOTIDE SEQUENCE [LARGE SCALE GENOMIC DNA]</scope>
</reference>
<reference key="2">
    <citation type="submission" date="2005-09" db="EMBL/GenBank/DDBJ databases">
        <authorList>
            <person name="Mural R.J."/>
            <person name="Istrail S."/>
            <person name="Sutton G.G."/>
            <person name="Florea L."/>
            <person name="Halpern A.L."/>
            <person name="Mobarry C.M."/>
            <person name="Lippert R."/>
            <person name="Walenz B."/>
            <person name="Shatkay H."/>
            <person name="Dew I."/>
            <person name="Miller J.R."/>
            <person name="Flanigan M.J."/>
            <person name="Edwards N.J."/>
            <person name="Bolanos R."/>
            <person name="Fasulo D."/>
            <person name="Halldorsson B.V."/>
            <person name="Hannenhalli S."/>
            <person name="Turner R."/>
            <person name="Yooseph S."/>
            <person name="Lu F."/>
            <person name="Nusskern D.R."/>
            <person name="Shue B.C."/>
            <person name="Zheng X.H."/>
            <person name="Zhong F."/>
            <person name="Delcher A.L."/>
            <person name="Huson D.H."/>
            <person name="Kravitz S.A."/>
            <person name="Mouchard L."/>
            <person name="Reinert K."/>
            <person name="Remington K.A."/>
            <person name="Clark A.G."/>
            <person name="Waterman M.S."/>
            <person name="Eichler E.E."/>
            <person name="Adams M.D."/>
            <person name="Hunkapiller M.W."/>
            <person name="Myers E.W."/>
            <person name="Venter J.C."/>
        </authorList>
    </citation>
    <scope>NUCLEOTIDE SEQUENCE [LARGE SCALE GENOMIC DNA]</scope>
</reference>
<reference key="3">
    <citation type="journal article" date="2004" name="Genome Res.">
        <title>The status, quality, and expansion of the NIH full-length cDNA project: the Mammalian Gene Collection (MGC).</title>
        <authorList>
            <consortium name="The MGC Project Team"/>
        </authorList>
    </citation>
    <scope>NUCLEOTIDE SEQUENCE [LARGE SCALE MRNA] OF 42-258 (ISOFORM 2)</scope>
</reference>
<gene>
    <name type="primary">ANKRD30BL</name>
    <name type="synonym">NCRNA00164</name>
</gene>
<feature type="chain" id="PRO_0000341256" description="Putative ankyrin repeat domain-containing protein 30B-like">
    <location>
        <begin position="1"/>
        <end position="258"/>
    </location>
</feature>
<feature type="repeat" description="ANK 1">
    <location>
        <begin position="71"/>
        <end position="100"/>
    </location>
</feature>
<feature type="repeat" description="ANK 2">
    <location>
        <begin position="104"/>
        <end position="133"/>
    </location>
</feature>
<feature type="repeat" description="ANK 3">
    <location>
        <begin position="137"/>
        <end position="166"/>
    </location>
</feature>
<feature type="repeat" description="ANK 4">
    <location>
        <begin position="170"/>
        <end position="199"/>
    </location>
</feature>
<feature type="region of interest" description="Disordered" evidence="1">
    <location>
        <begin position="1"/>
        <end position="21"/>
    </location>
</feature>
<feature type="region of interest" description="Disordered" evidence="1">
    <location>
        <begin position="216"/>
        <end position="258"/>
    </location>
</feature>
<feature type="compositionally biased region" description="Polar residues" evidence="1">
    <location>
        <begin position="218"/>
        <end position="232"/>
    </location>
</feature>
<feature type="compositionally biased region" description="Basic and acidic residues" evidence="1">
    <location>
        <begin position="243"/>
        <end position="258"/>
    </location>
</feature>
<feature type="splice variant" id="VSP_039808" description="In isoform 2." evidence="2">
    <original>VHQQLLEYKQKISKNSQNSNPEGTSEGTPDEAAPLAERTPDTAESLVERTPDE</original>
    <variation>TALMLAICHGSSEIVGKLLQQNVDICAEATCGMIAERYAVACGFNL</variation>
    <location>
        <begin position="206"/>
        <end position="258"/>
    </location>
</feature>
<sequence length="258" mass="28549">MERLSAAPVKGQTGPERPSPFSQLVYTNNDSYVIHHGDLRKIHKAASRGQAWKLERMMKKTTMDLNIRDAKKRTALYWACANGHAEVVTLLVDRKCQLDVLDGENRTILMKALQCQREACANILIDSGADPNIVDVYGNTAVHYAVNSENLSVVAKLLSCGADIEVKNKAGHTPLLLAIRKRSEEIVEFLLTKNANANAVDKFKCVHQQLLEYKQKISKNSQNSNPEGTSEGTPDEAAPLAERTPDTAESLVERTPDE</sequence>
<accession>A7E2S9</accession>
<accession>B8ZZL7</accession>